<evidence type="ECO:0000255" key="1">
    <source>
        <dbReference type="HAMAP-Rule" id="MF_00480"/>
    </source>
</evidence>
<evidence type="ECO:0000305" key="2"/>
<accession>Q2NQL5</accession>
<organism>
    <name type="scientific">Sodalis glossinidius (strain morsitans)</name>
    <dbReference type="NCBI Taxonomy" id="343509"/>
    <lineage>
        <taxon>Bacteria</taxon>
        <taxon>Pseudomonadati</taxon>
        <taxon>Pseudomonadota</taxon>
        <taxon>Gammaproteobacteria</taxon>
        <taxon>Enterobacterales</taxon>
        <taxon>Bruguierivoracaceae</taxon>
        <taxon>Sodalis</taxon>
    </lineage>
</organism>
<comment type="function">
    <text evidence="1">One of the primary rRNA binding proteins, it binds directly to 16S rRNA where it nucleates assembly of the head domain of the 30S subunit. Is located at the subunit interface close to the decoding center, probably blocks exit of the E-site tRNA.</text>
</comment>
<comment type="subunit">
    <text evidence="1">Part of the 30S ribosomal subunit. Contacts proteins S9 and S11.</text>
</comment>
<comment type="similarity">
    <text evidence="1">Belongs to the universal ribosomal protein uS7 family.</text>
</comment>
<sequence>MPRRRVIGQRKILPDPKFGSELLAKFVNILMVDGKKSTAEAIVYTALETLAQRSGKGHLEAFEVALDNVRPTVEVKSRRVGGSTYQVPVEVRPVRRNALAMRWIVEAARKRGDKSMALRLANELSDAAENKGTAVKKREDVHRMADANKAFAHYRW</sequence>
<reference key="1">
    <citation type="journal article" date="2006" name="Genome Res.">
        <title>Massive genome erosion and functional adaptations provide insights into the symbiotic lifestyle of Sodalis glossinidius in the tsetse host.</title>
        <authorList>
            <person name="Toh H."/>
            <person name="Weiss B.L."/>
            <person name="Perkin S.A.H."/>
            <person name="Yamashita A."/>
            <person name="Oshima K."/>
            <person name="Hattori M."/>
            <person name="Aksoy S."/>
        </authorList>
    </citation>
    <scope>NUCLEOTIDE SEQUENCE [LARGE SCALE GENOMIC DNA]</scope>
    <source>
        <strain>morsitans</strain>
    </source>
</reference>
<dbReference type="EMBL" id="AP008232">
    <property type="protein sequence ID" value="BAE75560.1"/>
    <property type="molecule type" value="Genomic_DNA"/>
</dbReference>
<dbReference type="RefSeq" id="WP_011412093.1">
    <property type="nucleotide sequence ID" value="NZ_LN854557.1"/>
</dbReference>
<dbReference type="SMR" id="Q2NQL5"/>
<dbReference type="STRING" id="343509.SG2285"/>
<dbReference type="KEGG" id="sgl:SG2285"/>
<dbReference type="eggNOG" id="COG0049">
    <property type="taxonomic scope" value="Bacteria"/>
</dbReference>
<dbReference type="HOGENOM" id="CLU_072226_1_1_6"/>
<dbReference type="OrthoDB" id="9807653at2"/>
<dbReference type="BioCyc" id="SGLO343509:SGP1_RS20880-MONOMER"/>
<dbReference type="Proteomes" id="UP000001932">
    <property type="component" value="Chromosome"/>
</dbReference>
<dbReference type="GO" id="GO:0015935">
    <property type="term" value="C:small ribosomal subunit"/>
    <property type="evidence" value="ECO:0007669"/>
    <property type="project" value="InterPro"/>
</dbReference>
<dbReference type="GO" id="GO:0019843">
    <property type="term" value="F:rRNA binding"/>
    <property type="evidence" value="ECO:0007669"/>
    <property type="project" value="UniProtKB-UniRule"/>
</dbReference>
<dbReference type="GO" id="GO:0003735">
    <property type="term" value="F:structural constituent of ribosome"/>
    <property type="evidence" value="ECO:0007669"/>
    <property type="project" value="InterPro"/>
</dbReference>
<dbReference type="GO" id="GO:0000049">
    <property type="term" value="F:tRNA binding"/>
    <property type="evidence" value="ECO:0007669"/>
    <property type="project" value="UniProtKB-UniRule"/>
</dbReference>
<dbReference type="GO" id="GO:0006412">
    <property type="term" value="P:translation"/>
    <property type="evidence" value="ECO:0007669"/>
    <property type="project" value="UniProtKB-UniRule"/>
</dbReference>
<dbReference type="CDD" id="cd14869">
    <property type="entry name" value="uS7_Bacteria"/>
    <property type="match status" value="1"/>
</dbReference>
<dbReference type="FunFam" id="1.10.455.10:FF:000001">
    <property type="entry name" value="30S ribosomal protein S7"/>
    <property type="match status" value="1"/>
</dbReference>
<dbReference type="Gene3D" id="1.10.455.10">
    <property type="entry name" value="Ribosomal protein S7 domain"/>
    <property type="match status" value="1"/>
</dbReference>
<dbReference type="HAMAP" id="MF_00480_B">
    <property type="entry name" value="Ribosomal_uS7_B"/>
    <property type="match status" value="1"/>
</dbReference>
<dbReference type="InterPro" id="IPR000235">
    <property type="entry name" value="Ribosomal_uS7"/>
</dbReference>
<dbReference type="InterPro" id="IPR005717">
    <property type="entry name" value="Ribosomal_uS7_bac/org-type"/>
</dbReference>
<dbReference type="InterPro" id="IPR020606">
    <property type="entry name" value="Ribosomal_uS7_CS"/>
</dbReference>
<dbReference type="InterPro" id="IPR023798">
    <property type="entry name" value="Ribosomal_uS7_dom"/>
</dbReference>
<dbReference type="InterPro" id="IPR036823">
    <property type="entry name" value="Ribosomal_uS7_dom_sf"/>
</dbReference>
<dbReference type="NCBIfam" id="TIGR01029">
    <property type="entry name" value="rpsG_bact"/>
    <property type="match status" value="1"/>
</dbReference>
<dbReference type="PANTHER" id="PTHR11205">
    <property type="entry name" value="RIBOSOMAL PROTEIN S7"/>
    <property type="match status" value="1"/>
</dbReference>
<dbReference type="Pfam" id="PF00177">
    <property type="entry name" value="Ribosomal_S7"/>
    <property type="match status" value="1"/>
</dbReference>
<dbReference type="PIRSF" id="PIRSF002122">
    <property type="entry name" value="RPS7p_RPS7a_RPS5e_RPS7o"/>
    <property type="match status" value="1"/>
</dbReference>
<dbReference type="SUPFAM" id="SSF47973">
    <property type="entry name" value="Ribosomal protein S7"/>
    <property type="match status" value="1"/>
</dbReference>
<dbReference type="PROSITE" id="PS00052">
    <property type="entry name" value="RIBOSOMAL_S7"/>
    <property type="match status" value="1"/>
</dbReference>
<keyword id="KW-0687">Ribonucleoprotein</keyword>
<keyword id="KW-0689">Ribosomal protein</keyword>
<keyword id="KW-0694">RNA-binding</keyword>
<keyword id="KW-0699">rRNA-binding</keyword>
<keyword id="KW-0820">tRNA-binding</keyword>
<protein>
    <recommendedName>
        <fullName evidence="1">Small ribosomal subunit protein uS7</fullName>
    </recommendedName>
    <alternativeName>
        <fullName evidence="2">30S ribosomal protein S7</fullName>
    </alternativeName>
</protein>
<name>RS7_SODGM</name>
<proteinExistence type="inferred from homology"/>
<gene>
    <name evidence="1" type="primary">rpsG</name>
    <name type="ordered locus">SG2285</name>
</gene>
<feature type="chain" id="PRO_0000241777" description="Small ribosomal subunit protein uS7">
    <location>
        <begin position="1"/>
        <end position="156"/>
    </location>
</feature>